<reference key="1">
    <citation type="journal article" date="2004" name="Proc. Natl. Acad. Sci. U.S.A.">
        <title>Insights into the evolution of Yersinia pestis through whole-genome comparison with Yersinia pseudotuberculosis.</title>
        <authorList>
            <person name="Chain P.S.G."/>
            <person name="Carniel E."/>
            <person name="Larimer F.W."/>
            <person name="Lamerdin J."/>
            <person name="Stoutland P.O."/>
            <person name="Regala W.M."/>
            <person name="Georgescu A.M."/>
            <person name="Vergez L.M."/>
            <person name="Land M.L."/>
            <person name="Motin V.L."/>
            <person name="Brubaker R.R."/>
            <person name="Fowler J."/>
            <person name="Hinnebusch J."/>
            <person name="Marceau M."/>
            <person name="Medigue C."/>
            <person name="Simonet M."/>
            <person name="Chenal-Francisque V."/>
            <person name="Souza B."/>
            <person name="Dacheux D."/>
            <person name="Elliott J.M."/>
            <person name="Derbise A."/>
            <person name="Hauser L.J."/>
            <person name="Garcia E."/>
        </authorList>
    </citation>
    <scope>NUCLEOTIDE SEQUENCE [LARGE SCALE GENOMIC DNA]</scope>
    <source>
        <strain>IP32953</strain>
    </source>
</reference>
<sequence>MLNVSGLWAEYQGKPALQDVSLQIASGQLVVVLGPSGCGKTTLLNLIAGFMTPSAGVITLDNIPVSGPSAERGVVFQNEGLLPWRDVVSNVEFGLQLAGMSKEQRRVTALKMLNRVGLAGFEHHFIWQLSGGMRQRVGIARALAVDPRLLLLDEPFGALDAFTREQMQELLLTIWRDTGKQILLITHDIEEAVFLASELLLLSPGPGQVVERLSLNFGQRYAEGEPCRAIKSDPEFIARREYVLGKVFQQREVLI</sequence>
<name>TAUB_YERPS</name>
<protein>
    <recommendedName>
        <fullName evidence="1">Taurine import ATP-binding protein TauB</fullName>
        <ecNumber evidence="1">7.6.2.7</ecNumber>
    </recommendedName>
</protein>
<feature type="chain" id="PRO_0000093021" description="Taurine import ATP-binding protein TauB">
    <location>
        <begin position="1"/>
        <end position="255"/>
    </location>
</feature>
<feature type="domain" description="ABC transporter" evidence="1">
    <location>
        <begin position="2"/>
        <end position="229"/>
    </location>
</feature>
<feature type="binding site" evidence="1">
    <location>
        <begin position="34"/>
        <end position="41"/>
    </location>
    <ligand>
        <name>ATP</name>
        <dbReference type="ChEBI" id="CHEBI:30616"/>
    </ligand>
</feature>
<keyword id="KW-0067">ATP-binding</keyword>
<keyword id="KW-0997">Cell inner membrane</keyword>
<keyword id="KW-1003">Cell membrane</keyword>
<keyword id="KW-0472">Membrane</keyword>
<keyword id="KW-0547">Nucleotide-binding</keyword>
<keyword id="KW-1278">Translocase</keyword>
<keyword id="KW-0813">Transport</keyword>
<gene>
    <name evidence="1" type="primary">tauB</name>
    <name type="ordered locus">YPTB3721</name>
</gene>
<organism>
    <name type="scientific">Yersinia pseudotuberculosis serotype I (strain IP32953)</name>
    <dbReference type="NCBI Taxonomy" id="273123"/>
    <lineage>
        <taxon>Bacteria</taxon>
        <taxon>Pseudomonadati</taxon>
        <taxon>Pseudomonadota</taxon>
        <taxon>Gammaproteobacteria</taxon>
        <taxon>Enterobacterales</taxon>
        <taxon>Yersiniaceae</taxon>
        <taxon>Yersinia</taxon>
    </lineage>
</organism>
<accession>Q664P8</accession>
<evidence type="ECO:0000255" key="1">
    <source>
        <dbReference type="HAMAP-Rule" id="MF_01714"/>
    </source>
</evidence>
<dbReference type="EC" id="7.6.2.7" evidence="1"/>
<dbReference type="EMBL" id="BX936398">
    <property type="protein sequence ID" value="CAH22959.1"/>
    <property type="molecule type" value="Genomic_DNA"/>
</dbReference>
<dbReference type="RefSeq" id="WP_011193220.1">
    <property type="nucleotide sequence ID" value="NC_006155.1"/>
</dbReference>
<dbReference type="SMR" id="Q664P8"/>
<dbReference type="GeneID" id="49784285"/>
<dbReference type="KEGG" id="ypo:BZ17_2866"/>
<dbReference type="KEGG" id="yps:YPTB3721"/>
<dbReference type="PATRIC" id="fig|273123.14.peg.3007"/>
<dbReference type="Proteomes" id="UP000001011">
    <property type="component" value="Chromosome"/>
</dbReference>
<dbReference type="GO" id="GO:0005886">
    <property type="term" value="C:plasma membrane"/>
    <property type="evidence" value="ECO:0007669"/>
    <property type="project" value="UniProtKB-SubCell"/>
</dbReference>
<dbReference type="GO" id="GO:0015411">
    <property type="term" value="F:ABC-type taurine transporter transporter activity"/>
    <property type="evidence" value="ECO:0007669"/>
    <property type="project" value="UniProtKB-EC"/>
</dbReference>
<dbReference type="GO" id="GO:0005524">
    <property type="term" value="F:ATP binding"/>
    <property type="evidence" value="ECO:0007669"/>
    <property type="project" value="UniProtKB-KW"/>
</dbReference>
<dbReference type="GO" id="GO:0016887">
    <property type="term" value="F:ATP hydrolysis activity"/>
    <property type="evidence" value="ECO:0007669"/>
    <property type="project" value="InterPro"/>
</dbReference>
<dbReference type="CDD" id="cd03293">
    <property type="entry name" value="ABC_NrtD_SsuB_transporters"/>
    <property type="match status" value="1"/>
</dbReference>
<dbReference type="Gene3D" id="3.40.50.300">
    <property type="entry name" value="P-loop containing nucleotide triphosphate hydrolases"/>
    <property type="match status" value="1"/>
</dbReference>
<dbReference type="InterPro" id="IPR003593">
    <property type="entry name" value="AAA+_ATPase"/>
</dbReference>
<dbReference type="InterPro" id="IPR003439">
    <property type="entry name" value="ABC_transporter-like_ATP-bd"/>
</dbReference>
<dbReference type="InterPro" id="IPR017871">
    <property type="entry name" value="ABC_transporter-like_CS"/>
</dbReference>
<dbReference type="InterPro" id="IPR050166">
    <property type="entry name" value="ABC_transporter_ATP-bind"/>
</dbReference>
<dbReference type="InterPro" id="IPR027417">
    <property type="entry name" value="P-loop_NTPase"/>
</dbReference>
<dbReference type="NCBIfam" id="NF008421">
    <property type="entry name" value="PRK11248.1"/>
    <property type="match status" value="1"/>
</dbReference>
<dbReference type="PANTHER" id="PTHR42788:SF18">
    <property type="entry name" value="TAURINE IMPORT ATP-BINDING PROTEIN TAUB"/>
    <property type="match status" value="1"/>
</dbReference>
<dbReference type="PANTHER" id="PTHR42788">
    <property type="entry name" value="TAURINE IMPORT ATP-BINDING PROTEIN-RELATED"/>
    <property type="match status" value="1"/>
</dbReference>
<dbReference type="Pfam" id="PF00005">
    <property type="entry name" value="ABC_tran"/>
    <property type="match status" value="1"/>
</dbReference>
<dbReference type="SMART" id="SM00382">
    <property type="entry name" value="AAA"/>
    <property type="match status" value="1"/>
</dbReference>
<dbReference type="SUPFAM" id="SSF52540">
    <property type="entry name" value="P-loop containing nucleoside triphosphate hydrolases"/>
    <property type="match status" value="1"/>
</dbReference>
<dbReference type="PROSITE" id="PS00211">
    <property type="entry name" value="ABC_TRANSPORTER_1"/>
    <property type="match status" value="1"/>
</dbReference>
<dbReference type="PROSITE" id="PS50893">
    <property type="entry name" value="ABC_TRANSPORTER_2"/>
    <property type="match status" value="1"/>
</dbReference>
<dbReference type="PROSITE" id="PS51250">
    <property type="entry name" value="TAUB"/>
    <property type="match status" value="1"/>
</dbReference>
<comment type="function">
    <text evidence="1">Part of the ABC transporter complex TauABC involved in taurine import. Responsible for energy coupling to the transport system.</text>
</comment>
<comment type="catalytic activity">
    <reaction evidence="1">
        <text>taurine(out) + ATP + H2O = taurine(in) + ADP + phosphate + H(+)</text>
        <dbReference type="Rhea" id="RHEA:14613"/>
        <dbReference type="ChEBI" id="CHEBI:15377"/>
        <dbReference type="ChEBI" id="CHEBI:15378"/>
        <dbReference type="ChEBI" id="CHEBI:30616"/>
        <dbReference type="ChEBI" id="CHEBI:43474"/>
        <dbReference type="ChEBI" id="CHEBI:456216"/>
        <dbReference type="ChEBI" id="CHEBI:507393"/>
        <dbReference type="EC" id="7.6.2.7"/>
    </reaction>
</comment>
<comment type="subunit">
    <text evidence="1">The complex is composed of two ATP-binding proteins (TauB), two transmembrane proteins (TauC) and a solute-binding protein (TauA).</text>
</comment>
<comment type="subcellular location">
    <subcellularLocation>
        <location evidence="1">Cell inner membrane</location>
        <topology evidence="1">Peripheral membrane protein</topology>
    </subcellularLocation>
</comment>
<comment type="similarity">
    <text evidence="1">Belongs to the ABC transporter superfamily. Taurine importer (TC 3.A.1.17.1) family.</text>
</comment>
<proteinExistence type="inferred from homology"/>